<comment type="function">
    <text evidence="1">Nucleoside triphosphate pyrophosphatase. May have a dual role in cell division arrest and in preventing the incorporation of modified nucleotides into cellular nucleic acids.</text>
</comment>
<comment type="catalytic activity">
    <reaction evidence="1">
        <text>a ribonucleoside 5'-triphosphate + H2O = a ribonucleoside 5'-phosphate + diphosphate + H(+)</text>
        <dbReference type="Rhea" id="RHEA:23996"/>
        <dbReference type="ChEBI" id="CHEBI:15377"/>
        <dbReference type="ChEBI" id="CHEBI:15378"/>
        <dbReference type="ChEBI" id="CHEBI:33019"/>
        <dbReference type="ChEBI" id="CHEBI:58043"/>
        <dbReference type="ChEBI" id="CHEBI:61557"/>
        <dbReference type="EC" id="3.6.1.9"/>
    </reaction>
</comment>
<comment type="catalytic activity">
    <reaction evidence="1">
        <text>a 2'-deoxyribonucleoside 5'-triphosphate + H2O = a 2'-deoxyribonucleoside 5'-phosphate + diphosphate + H(+)</text>
        <dbReference type="Rhea" id="RHEA:44644"/>
        <dbReference type="ChEBI" id="CHEBI:15377"/>
        <dbReference type="ChEBI" id="CHEBI:15378"/>
        <dbReference type="ChEBI" id="CHEBI:33019"/>
        <dbReference type="ChEBI" id="CHEBI:61560"/>
        <dbReference type="ChEBI" id="CHEBI:65317"/>
        <dbReference type="EC" id="3.6.1.9"/>
    </reaction>
</comment>
<comment type="cofactor">
    <cofactor evidence="1">
        <name>a divalent metal cation</name>
        <dbReference type="ChEBI" id="CHEBI:60240"/>
    </cofactor>
</comment>
<comment type="subcellular location">
    <subcellularLocation>
        <location evidence="1">Cytoplasm</location>
    </subcellularLocation>
</comment>
<comment type="similarity">
    <text evidence="1">Belongs to the Maf family.</text>
</comment>
<keyword id="KW-0963">Cytoplasm</keyword>
<keyword id="KW-0378">Hydrolase</keyword>
<keyword id="KW-0546">Nucleotide metabolism</keyword>
<protein>
    <recommendedName>
        <fullName evidence="1">Nucleoside triphosphate pyrophosphatase</fullName>
        <ecNumber evidence="1">3.6.1.9</ecNumber>
    </recommendedName>
    <alternativeName>
        <fullName evidence="1">Nucleotide pyrophosphatase</fullName>
        <shortName evidence="1">Nucleotide PPase</shortName>
    </alternativeName>
</protein>
<accession>Q1BCI0</accession>
<name>NTPP_MYCSS</name>
<evidence type="ECO:0000255" key="1">
    <source>
        <dbReference type="HAMAP-Rule" id="MF_00528"/>
    </source>
</evidence>
<reference key="1">
    <citation type="submission" date="2006-06" db="EMBL/GenBank/DDBJ databases">
        <title>Complete sequence of chromosome of Mycobacterium sp. MCS.</title>
        <authorList>
            <consortium name="US DOE Joint Genome Institute"/>
            <person name="Copeland A."/>
            <person name="Lucas S."/>
            <person name="Lapidus A."/>
            <person name="Barry K."/>
            <person name="Detter J.C."/>
            <person name="Glavina del Rio T."/>
            <person name="Hammon N."/>
            <person name="Israni S."/>
            <person name="Dalin E."/>
            <person name="Tice H."/>
            <person name="Pitluck S."/>
            <person name="Martinez M."/>
            <person name="Schmutz J."/>
            <person name="Larimer F."/>
            <person name="Land M."/>
            <person name="Hauser L."/>
            <person name="Kyrpides N."/>
            <person name="Kim E."/>
            <person name="Miller C.D."/>
            <person name="Hughes J.E."/>
            <person name="Anderson A.J."/>
            <person name="Sims R.C."/>
            <person name="Richardson P."/>
        </authorList>
    </citation>
    <scope>NUCLEOTIDE SEQUENCE [LARGE SCALE GENOMIC DNA]</scope>
    <source>
        <strain>MCS</strain>
    </source>
</reference>
<proteinExistence type="inferred from homology"/>
<sequence length="210" mass="21557">MTTRVVLGSASSGRLKVLRQAGIEPLVVVSGVDEDAIVAALGAAAPPDQVVCALAAAKAASVVESLPTEVATDCVVIGCDSMLQLDGRLTGKPGTPAAARAQWQQMAGRSGELYTGHCLVRVRDGVAGRREVEAAATTVRFGTPPPADLAAYVDSGEPLGVAGAFTLDGLGGWFLDGVDGDPSNVIGLSLPLVRRMLDRLDLSVPALWTR</sequence>
<organism>
    <name type="scientific">Mycobacterium sp. (strain MCS)</name>
    <dbReference type="NCBI Taxonomy" id="164756"/>
    <lineage>
        <taxon>Bacteria</taxon>
        <taxon>Bacillati</taxon>
        <taxon>Actinomycetota</taxon>
        <taxon>Actinomycetes</taxon>
        <taxon>Mycobacteriales</taxon>
        <taxon>Mycobacteriaceae</taxon>
        <taxon>Mycobacterium</taxon>
    </lineage>
</organism>
<feature type="chain" id="PRO_0000267345" description="Nucleoside triphosphate pyrophosphatase">
    <location>
        <begin position="1"/>
        <end position="210"/>
    </location>
</feature>
<feature type="active site" description="Proton acceptor" evidence="1">
    <location>
        <position position="80"/>
    </location>
</feature>
<dbReference type="EC" id="3.6.1.9" evidence="1"/>
<dbReference type="EMBL" id="CP000384">
    <property type="protein sequence ID" value="ABG07404.1"/>
    <property type="molecule type" value="Genomic_DNA"/>
</dbReference>
<dbReference type="SMR" id="Q1BCI0"/>
<dbReference type="KEGG" id="mmc:Mmcs_1292"/>
<dbReference type="HOGENOM" id="CLU_040416_1_2_11"/>
<dbReference type="BioCyc" id="MSP164756:G1G6O-1319-MONOMER"/>
<dbReference type="GO" id="GO:0005737">
    <property type="term" value="C:cytoplasm"/>
    <property type="evidence" value="ECO:0007669"/>
    <property type="project" value="UniProtKB-SubCell"/>
</dbReference>
<dbReference type="GO" id="GO:0047429">
    <property type="term" value="F:nucleoside triphosphate diphosphatase activity"/>
    <property type="evidence" value="ECO:0007669"/>
    <property type="project" value="UniProtKB-EC"/>
</dbReference>
<dbReference type="GO" id="GO:0009117">
    <property type="term" value="P:nucleotide metabolic process"/>
    <property type="evidence" value="ECO:0007669"/>
    <property type="project" value="UniProtKB-KW"/>
</dbReference>
<dbReference type="CDD" id="cd00555">
    <property type="entry name" value="Maf"/>
    <property type="match status" value="1"/>
</dbReference>
<dbReference type="Gene3D" id="3.90.950.10">
    <property type="match status" value="1"/>
</dbReference>
<dbReference type="HAMAP" id="MF_00528">
    <property type="entry name" value="Maf"/>
    <property type="match status" value="1"/>
</dbReference>
<dbReference type="InterPro" id="IPR029001">
    <property type="entry name" value="ITPase-like_fam"/>
</dbReference>
<dbReference type="InterPro" id="IPR003697">
    <property type="entry name" value="Maf-like"/>
</dbReference>
<dbReference type="NCBIfam" id="TIGR00172">
    <property type="entry name" value="maf"/>
    <property type="match status" value="1"/>
</dbReference>
<dbReference type="PANTHER" id="PTHR43213">
    <property type="entry name" value="BIFUNCTIONAL DTTP/UTP PYROPHOSPHATASE/METHYLTRANSFERASE PROTEIN-RELATED"/>
    <property type="match status" value="1"/>
</dbReference>
<dbReference type="PANTHER" id="PTHR43213:SF5">
    <property type="entry name" value="BIFUNCTIONAL DTTP_UTP PYROPHOSPHATASE_METHYLTRANSFERASE PROTEIN-RELATED"/>
    <property type="match status" value="1"/>
</dbReference>
<dbReference type="Pfam" id="PF02545">
    <property type="entry name" value="Maf"/>
    <property type="match status" value="1"/>
</dbReference>
<dbReference type="PIRSF" id="PIRSF006305">
    <property type="entry name" value="Maf"/>
    <property type="match status" value="1"/>
</dbReference>
<dbReference type="SUPFAM" id="SSF52972">
    <property type="entry name" value="ITPase-like"/>
    <property type="match status" value="1"/>
</dbReference>
<gene>
    <name type="ordered locus">Mmcs_1292</name>
</gene>